<gene>
    <name evidence="1" type="primary">rplT</name>
    <name type="ordered locus">LI0214</name>
</gene>
<keyword id="KW-1185">Reference proteome</keyword>
<keyword id="KW-0687">Ribonucleoprotein</keyword>
<keyword id="KW-0689">Ribosomal protein</keyword>
<keyword id="KW-0694">RNA-binding</keyword>
<keyword id="KW-0699">rRNA-binding</keyword>
<sequence>MRVKRGFSAHRRHKKYLEMAKGFRGGRSRLYRTAREAVERSLVYAYIGRKQRKREFRKLWILRINAGAREHGLSYSKMMAGLSQAGIMLNRKILAELAVKQKEDFAKLVEIAKNQVH</sequence>
<name>RL20_LAWIP</name>
<dbReference type="EMBL" id="AM180252">
    <property type="protein sequence ID" value="CAJ54270.1"/>
    <property type="molecule type" value="Genomic_DNA"/>
</dbReference>
<dbReference type="RefSeq" id="WP_011526296.1">
    <property type="nucleotide sequence ID" value="NC_008011.1"/>
</dbReference>
<dbReference type="SMR" id="Q1MRV6"/>
<dbReference type="STRING" id="363253.LI0214"/>
<dbReference type="KEGG" id="lip:LI0214"/>
<dbReference type="eggNOG" id="COG0292">
    <property type="taxonomic scope" value="Bacteria"/>
</dbReference>
<dbReference type="HOGENOM" id="CLU_123265_0_1_7"/>
<dbReference type="OrthoDB" id="9808966at2"/>
<dbReference type="Proteomes" id="UP000002430">
    <property type="component" value="Chromosome"/>
</dbReference>
<dbReference type="GO" id="GO:1990904">
    <property type="term" value="C:ribonucleoprotein complex"/>
    <property type="evidence" value="ECO:0007669"/>
    <property type="project" value="UniProtKB-KW"/>
</dbReference>
<dbReference type="GO" id="GO:0005840">
    <property type="term" value="C:ribosome"/>
    <property type="evidence" value="ECO:0007669"/>
    <property type="project" value="UniProtKB-KW"/>
</dbReference>
<dbReference type="GO" id="GO:0019843">
    <property type="term" value="F:rRNA binding"/>
    <property type="evidence" value="ECO:0007669"/>
    <property type="project" value="UniProtKB-UniRule"/>
</dbReference>
<dbReference type="GO" id="GO:0003735">
    <property type="term" value="F:structural constituent of ribosome"/>
    <property type="evidence" value="ECO:0007669"/>
    <property type="project" value="InterPro"/>
</dbReference>
<dbReference type="GO" id="GO:0000027">
    <property type="term" value="P:ribosomal large subunit assembly"/>
    <property type="evidence" value="ECO:0007669"/>
    <property type="project" value="UniProtKB-UniRule"/>
</dbReference>
<dbReference type="GO" id="GO:0006412">
    <property type="term" value="P:translation"/>
    <property type="evidence" value="ECO:0007669"/>
    <property type="project" value="InterPro"/>
</dbReference>
<dbReference type="CDD" id="cd07026">
    <property type="entry name" value="Ribosomal_L20"/>
    <property type="match status" value="1"/>
</dbReference>
<dbReference type="FunFam" id="1.10.1900.20:FF:000001">
    <property type="entry name" value="50S ribosomal protein L20"/>
    <property type="match status" value="1"/>
</dbReference>
<dbReference type="Gene3D" id="6.10.160.10">
    <property type="match status" value="1"/>
</dbReference>
<dbReference type="Gene3D" id="1.10.1900.20">
    <property type="entry name" value="Ribosomal protein L20"/>
    <property type="match status" value="1"/>
</dbReference>
<dbReference type="HAMAP" id="MF_00382">
    <property type="entry name" value="Ribosomal_bL20"/>
    <property type="match status" value="1"/>
</dbReference>
<dbReference type="InterPro" id="IPR005813">
    <property type="entry name" value="Ribosomal_bL20"/>
</dbReference>
<dbReference type="InterPro" id="IPR049946">
    <property type="entry name" value="RIBOSOMAL_L20_CS"/>
</dbReference>
<dbReference type="InterPro" id="IPR035566">
    <property type="entry name" value="Ribosomal_protein_bL20_C"/>
</dbReference>
<dbReference type="NCBIfam" id="TIGR01032">
    <property type="entry name" value="rplT_bact"/>
    <property type="match status" value="1"/>
</dbReference>
<dbReference type="PANTHER" id="PTHR10986">
    <property type="entry name" value="39S RIBOSOMAL PROTEIN L20"/>
    <property type="match status" value="1"/>
</dbReference>
<dbReference type="Pfam" id="PF00453">
    <property type="entry name" value="Ribosomal_L20"/>
    <property type="match status" value="1"/>
</dbReference>
<dbReference type="PRINTS" id="PR00062">
    <property type="entry name" value="RIBOSOMALL20"/>
</dbReference>
<dbReference type="SUPFAM" id="SSF74731">
    <property type="entry name" value="Ribosomal protein L20"/>
    <property type="match status" value="1"/>
</dbReference>
<dbReference type="PROSITE" id="PS00937">
    <property type="entry name" value="RIBOSOMAL_L20"/>
    <property type="match status" value="1"/>
</dbReference>
<evidence type="ECO:0000255" key="1">
    <source>
        <dbReference type="HAMAP-Rule" id="MF_00382"/>
    </source>
</evidence>
<evidence type="ECO:0000305" key="2"/>
<feature type="chain" id="PRO_1000049001" description="Large ribosomal subunit protein bL20">
    <location>
        <begin position="1"/>
        <end position="117"/>
    </location>
</feature>
<organism>
    <name type="scientific">Lawsonia intracellularis (strain PHE/MN1-00)</name>
    <dbReference type="NCBI Taxonomy" id="363253"/>
    <lineage>
        <taxon>Bacteria</taxon>
        <taxon>Pseudomonadati</taxon>
        <taxon>Thermodesulfobacteriota</taxon>
        <taxon>Desulfovibrionia</taxon>
        <taxon>Desulfovibrionales</taxon>
        <taxon>Desulfovibrionaceae</taxon>
        <taxon>Lawsonia</taxon>
    </lineage>
</organism>
<comment type="function">
    <text evidence="1">Binds directly to 23S ribosomal RNA and is necessary for the in vitro assembly process of the 50S ribosomal subunit. It is not involved in the protein synthesizing functions of that subunit.</text>
</comment>
<comment type="similarity">
    <text evidence="1">Belongs to the bacterial ribosomal protein bL20 family.</text>
</comment>
<proteinExistence type="inferred from homology"/>
<accession>Q1MRV6</accession>
<protein>
    <recommendedName>
        <fullName evidence="1">Large ribosomal subunit protein bL20</fullName>
    </recommendedName>
    <alternativeName>
        <fullName evidence="2">50S ribosomal protein L20</fullName>
    </alternativeName>
</protein>
<reference key="1">
    <citation type="submission" date="2005-11" db="EMBL/GenBank/DDBJ databases">
        <title>The complete genome sequence of Lawsonia intracellularis: the causative agent of proliferative enteropathy.</title>
        <authorList>
            <person name="Kaur K."/>
            <person name="Zhang Q."/>
            <person name="Beckler D."/>
            <person name="Munir S."/>
            <person name="Li L."/>
            <person name="Kinsley K."/>
            <person name="Herron L."/>
            <person name="Peterson A."/>
            <person name="May B."/>
            <person name="Singh S."/>
            <person name="Gebhart C."/>
            <person name="Kapur V."/>
        </authorList>
    </citation>
    <scope>NUCLEOTIDE SEQUENCE [LARGE SCALE GENOMIC DNA]</scope>
    <source>
        <strain>PHE/MN1-00</strain>
    </source>
</reference>